<protein>
    <recommendedName>
        <fullName evidence="1">Matrix protein 2</fullName>
    </recommendedName>
    <alternativeName>
        <fullName evidence="1">Proton channel protein M2</fullName>
    </alternativeName>
</protein>
<accession>A4GCK9</accession>
<dbReference type="EMBL" id="CY020462">
    <property type="protein sequence ID" value="ABO38375.1"/>
    <property type="molecule type" value="Viral_cRNA"/>
</dbReference>
<dbReference type="BMRB" id="A4GCK9"/>
<dbReference type="SMR" id="A4GCK9"/>
<dbReference type="GlyCosmos" id="A4GCK9">
    <property type="glycosylation" value="1 site, No reported glycans"/>
</dbReference>
<dbReference type="Proteomes" id="UP000008432">
    <property type="component" value="Genome"/>
</dbReference>
<dbReference type="GO" id="GO:0020002">
    <property type="term" value="C:host cell plasma membrane"/>
    <property type="evidence" value="ECO:0007669"/>
    <property type="project" value="UniProtKB-SubCell"/>
</dbReference>
<dbReference type="GO" id="GO:0016020">
    <property type="term" value="C:membrane"/>
    <property type="evidence" value="ECO:0007669"/>
    <property type="project" value="UniProtKB-UniRule"/>
</dbReference>
<dbReference type="GO" id="GO:0055036">
    <property type="term" value="C:virion membrane"/>
    <property type="evidence" value="ECO:0007669"/>
    <property type="project" value="UniProtKB-SubCell"/>
</dbReference>
<dbReference type="GO" id="GO:0005216">
    <property type="term" value="F:monoatomic ion channel activity"/>
    <property type="evidence" value="ECO:0007669"/>
    <property type="project" value="UniProtKB-UniRule"/>
</dbReference>
<dbReference type="GO" id="GO:0015078">
    <property type="term" value="F:proton transmembrane transporter activity"/>
    <property type="evidence" value="ECO:0007669"/>
    <property type="project" value="UniProtKB-UniRule"/>
</dbReference>
<dbReference type="GO" id="GO:0051259">
    <property type="term" value="P:protein complex oligomerization"/>
    <property type="evidence" value="ECO:0007669"/>
    <property type="project" value="UniProtKB-UniRule"/>
</dbReference>
<dbReference type="GO" id="GO:0044694">
    <property type="term" value="P:symbiont genome entry into host cell via pore formation in plasma membrane"/>
    <property type="evidence" value="ECO:0007669"/>
    <property type="project" value="UniProtKB-UniRule"/>
</dbReference>
<dbReference type="GO" id="GO:0140321">
    <property type="term" value="P:symbiont-mediated suppression of host autophagy"/>
    <property type="evidence" value="ECO:0007669"/>
    <property type="project" value="UniProtKB-KW"/>
</dbReference>
<dbReference type="Gene3D" id="6.10.250.1640">
    <property type="match status" value="1"/>
</dbReference>
<dbReference type="HAMAP" id="MF_04069">
    <property type="entry name" value="INFV_M2"/>
    <property type="match status" value="1"/>
</dbReference>
<dbReference type="InterPro" id="IPR002089">
    <property type="entry name" value="Flu_M2"/>
</dbReference>
<dbReference type="Pfam" id="PF00599">
    <property type="entry name" value="Flu_M2"/>
    <property type="match status" value="1"/>
</dbReference>
<evidence type="ECO:0000255" key="1">
    <source>
        <dbReference type="HAMAP-Rule" id="MF_04069"/>
    </source>
</evidence>
<evidence type="ECO:0000256" key="2">
    <source>
        <dbReference type="SAM" id="MobiDB-lite"/>
    </source>
</evidence>
<gene>
    <name evidence="1" type="primary">M</name>
    <name type="synonym">M2</name>
</gene>
<reference key="1">
    <citation type="submission" date="2007-03" db="EMBL/GenBank/DDBJ databases">
        <title>The NIAID influenza genome sequencing project.</title>
        <authorList>
            <person name="Ghedin E."/>
            <person name="Spiro D."/>
            <person name="Miller N."/>
            <person name="Zaborsky J."/>
            <person name="Feldblyum T."/>
            <person name="Subbu V."/>
            <person name="Shumway M."/>
            <person name="Sparenborg J."/>
            <person name="Groveman L."/>
            <person name="Halpin R."/>
            <person name="Sitz J."/>
            <person name="Koo H."/>
            <person name="Salzberg S.L."/>
            <person name="Webster R.G."/>
            <person name="Hoffmann E."/>
            <person name="Krauss S."/>
            <person name="Naeve C."/>
            <person name="Bao Y."/>
            <person name="Bolotov P."/>
            <person name="Dernovoy D."/>
            <person name="Kiryutin B."/>
            <person name="Lipman D.J."/>
            <person name="Tatusova T."/>
        </authorList>
    </citation>
    <scope>NUCLEOTIDE SEQUENCE [GENOMIC RNA]</scope>
</reference>
<reference key="2">
    <citation type="submission" date="2007-03" db="EMBL/GenBank/DDBJ databases">
        <authorList>
            <consortium name="The NIAID Influenza Genome Sequencing Consortium"/>
        </authorList>
    </citation>
    <scope>NUCLEOTIDE SEQUENCE [GENOMIC RNA]</scope>
</reference>
<organismHost>
    <name type="scientific">Aves</name>
    <dbReference type="NCBI Taxonomy" id="8782"/>
</organismHost>
<organismHost>
    <name type="scientific">Homo sapiens</name>
    <name type="common">Human</name>
    <dbReference type="NCBI Taxonomy" id="9606"/>
</organismHost>
<organismHost>
    <name type="scientific">Sus scrofa</name>
    <name type="common">Pig</name>
    <dbReference type="NCBI Taxonomy" id="9823"/>
</organismHost>
<organism>
    <name type="scientific">Influenza A virus (strain A/USA:Iowa/1943 H1N1)</name>
    <dbReference type="NCBI Taxonomy" id="425563"/>
    <lineage>
        <taxon>Viruses</taxon>
        <taxon>Riboviria</taxon>
        <taxon>Orthornavirae</taxon>
        <taxon>Negarnaviricota</taxon>
        <taxon>Polyploviricotina</taxon>
        <taxon>Insthoviricetes</taxon>
        <taxon>Articulavirales</taxon>
        <taxon>Orthomyxoviridae</taxon>
        <taxon>Alphainfluenzavirus</taxon>
        <taxon>Alphainfluenzavirus influenzae</taxon>
        <taxon>Influenza A virus</taxon>
    </lineage>
</organism>
<keyword id="KW-0025">Alternative splicing</keyword>
<keyword id="KW-1015">Disulfide bond</keyword>
<keyword id="KW-0325">Glycoprotein</keyword>
<keyword id="KW-1032">Host cell membrane</keyword>
<keyword id="KW-1043">Host membrane</keyword>
<keyword id="KW-0945">Host-virus interaction</keyword>
<keyword id="KW-0375">Hydrogen ion transport</keyword>
<keyword id="KW-1083">Inhibition of host autophagy by virus</keyword>
<keyword id="KW-0407">Ion channel</keyword>
<keyword id="KW-0406">Ion transport</keyword>
<keyword id="KW-0449">Lipoprotein</keyword>
<keyword id="KW-0472">Membrane</keyword>
<keyword id="KW-0564">Palmitate</keyword>
<keyword id="KW-0597">Phosphoprotein</keyword>
<keyword id="KW-0735">Signal-anchor</keyword>
<keyword id="KW-0812">Transmembrane</keyword>
<keyword id="KW-1133">Transmembrane helix</keyword>
<keyword id="KW-0813">Transport</keyword>
<keyword id="KW-1182">Viral ion channel</keyword>
<keyword id="KW-0946">Virion</keyword>
<sequence length="97" mass="11178">MSLLTEVETPIRNEWGCRCNDSSDPLVVAASIIGILHLILWILDRLFFKCIYRLFKHGLKRGPSTEGVPESMREEYRKEQQSAVDADDSHFVNIELE</sequence>
<feature type="chain" id="PRO_0000372921" description="Matrix protein 2">
    <location>
        <begin position="1"/>
        <end position="97"/>
    </location>
</feature>
<feature type="topological domain" description="Virion surface" evidence="1">
    <location>
        <begin position="1"/>
        <end position="22"/>
    </location>
</feature>
<feature type="transmembrane region" description="Helical; Signal-anchor for type III membrane protein" evidence="1">
    <location>
        <begin position="23"/>
        <end position="43"/>
    </location>
</feature>
<feature type="topological domain" description="Intravirion" evidence="1">
    <location>
        <begin position="44"/>
        <end position="97"/>
    </location>
</feature>
<feature type="region of interest" description="Disordered" evidence="2">
    <location>
        <begin position="59"/>
        <end position="85"/>
    </location>
</feature>
<feature type="compositionally biased region" description="Basic and acidic residues" evidence="2">
    <location>
        <begin position="71"/>
        <end position="80"/>
    </location>
</feature>
<feature type="site" description="Essential for channel activity, possibly by being protonated during channel activation, and by forming the channel gate and the selective filter" evidence="1">
    <location>
        <position position="37"/>
    </location>
</feature>
<feature type="site" description="Seems to be involved in pH gating" evidence="1">
    <location>
        <position position="41"/>
    </location>
</feature>
<feature type="modified residue" description="Phosphoserine; by host" evidence="1">
    <location>
        <position position="64"/>
    </location>
</feature>
<feature type="modified residue" description="Phosphoserine; by host" evidence="1">
    <location>
        <position position="82"/>
    </location>
</feature>
<feature type="lipid moiety-binding region" description="S-palmitoyl cysteine; by host" evidence="1">
    <location>
        <position position="50"/>
    </location>
</feature>
<feature type="glycosylation site" description="N-linked (GlcNAc...) asparagine; by host" evidence="1">
    <location>
        <position position="20"/>
    </location>
</feature>
<feature type="disulfide bond" description="Interchain (with C-17)" evidence="1">
    <location>
        <position position="17"/>
    </location>
</feature>
<feature type="disulfide bond" description="Interchain (with C-19)" evidence="1">
    <location>
        <position position="19"/>
    </location>
</feature>
<comment type="function">
    <text evidence="1">Forms a proton-selective ion channel that is necessary for the efficient release of the viral genome during virus entry. After attaching to the cell surface, the virion enters the cell by endocytosis. Acidification of the endosome triggers M2 ion channel activity. The influx of protons into virion interior is believed to disrupt interactions between the viral ribonucleoprotein (RNP), matrix protein 1 (M1), and lipid bilayers, thereby freeing the viral genome from interaction with viral proteins and enabling RNA segments to migrate to the host cell nucleus, where influenza virus RNA transcription and replication occur. Also plays a role in viral proteins secretory pathway. Elevates the intravesicular pH of normally acidic compartments, such as trans-Golgi network, preventing newly formed hemagglutinin from premature switching to the fusion-active conformation.</text>
</comment>
<comment type="activity regulation">
    <text>The M2 protein from most influenza A strains is inhibited by amantadine and rimantadine, resulting in viral uncoating incapacity. Emergence of amantadine-resistant variants is usually rapid.</text>
</comment>
<comment type="subunit">
    <text evidence="1">Homotetramer; composed of two disulfide-linked dimers held together by non-covalent interactions. May interact with matrix protein 1.</text>
</comment>
<comment type="subcellular location">
    <subcellularLocation>
        <location evidence="1">Virion membrane</location>
    </subcellularLocation>
    <subcellularLocation>
        <location evidence="1">Host apical cell membrane</location>
        <topology evidence="1">Single-pass type III membrane protein</topology>
    </subcellularLocation>
    <text evidence="1">Abundantly expressed at the apical plasma membrane in infected polarized epithelial cells, in close proximity to budding and assembled virions. Minor component of virions (only 16-20 molecules/virion).</text>
</comment>
<comment type="alternative products">
    <event type="alternative splicing"/>
    <isoform>
        <id>A4GCK9-1</id>
        <name>M2</name>
        <sequence type="displayed"/>
    </isoform>
    <isoform>
        <id>A4GCL0-1</id>
        <name>M1</name>
        <sequence type="external"/>
    </isoform>
    <text>Only the first 9 residues are shared by the 2 isoforms.</text>
</comment>
<comment type="domain">
    <text evidence="1">Cytoplasmic tail plays an important role in virion assembly and morphogenesis.</text>
</comment>
<comment type="miscellaneous">
    <text evidence="1">When the channel is activated, one or more imidazole moieties of His-37 probably become bi-protonated.</text>
</comment>
<comment type="similarity">
    <text evidence="1">Belongs to the influenza viruses matrix protein M2 family.</text>
</comment>
<proteinExistence type="inferred from homology"/>
<name>M2_I43A0</name>